<proteinExistence type="inferred from homology"/>
<evidence type="ECO:0000255" key="1">
    <source>
        <dbReference type="HAMAP-Rule" id="MF_00169"/>
    </source>
</evidence>
<reference key="1">
    <citation type="journal article" date="2004" name="Proc. Natl. Acad. Sci. U.S.A.">
        <title>The louse-borne human pathogen Bartonella quintana is a genomic derivative of the zoonotic agent Bartonella henselae.</title>
        <authorList>
            <person name="Alsmark U.C.M."/>
            <person name="Frank A.C."/>
            <person name="Karlberg E.O."/>
            <person name="Legault B.-A."/>
            <person name="Ardell D.H."/>
            <person name="Canbaeck B."/>
            <person name="Eriksson A.-S."/>
            <person name="Naeslund A.K."/>
            <person name="Handley S.A."/>
            <person name="Huvet M."/>
            <person name="La Scola B."/>
            <person name="Holmberg M."/>
            <person name="Andersson S.G.E."/>
        </authorList>
    </citation>
    <scope>NUCLEOTIDE SEQUENCE [LARGE SCALE GENOMIC DNA]</scope>
    <source>
        <strain>ATCC 49882 / DSM 28221 / CCUG 30454 / Houston 1</strain>
    </source>
</reference>
<accession>Q6G523</accession>
<feature type="chain" id="PRO_0000159873" description="3-dehydroquinate dehydratase">
    <location>
        <begin position="1"/>
        <end position="148"/>
    </location>
</feature>
<feature type="active site" description="Proton acceptor" evidence="1">
    <location>
        <position position="24"/>
    </location>
</feature>
<feature type="active site" description="Proton donor" evidence="1">
    <location>
        <position position="101"/>
    </location>
</feature>
<feature type="binding site" evidence="1">
    <location>
        <position position="75"/>
    </location>
    <ligand>
        <name>substrate</name>
    </ligand>
</feature>
<feature type="binding site" evidence="1">
    <location>
        <position position="81"/>
    </location>
    <ligand>
        <name>substrate</name>
    </ligand>
</feature>
<feature type="binding site" evidence="1">
    <location>
        <position position="88"/>
    </location>
    <ligand>
        <name>substrate</name>
    </ligand>
</feature>
<feature type="binding site" evidence="1">
    <location>
        <begin position="102"/>
        <end position="103"/>
    </location>
    <ligand>
        <name>substrate</name>
    </ligand>
</feature>
<feature type="binding site" evidence="1">
    <location>
        <position position="112"/>
    </location>
    <ligand>
        <name>substrate</name>
    </ligand>
</feature>
<feature type="site" description="Transition state stabilizer" evidence="1">
    <location>
        <position position="19"/>
    </location>
</feature>
<organism>
    <name type="scientific">Bartonella henselae (strain ATCC 49882 / DSM 28221 / CCUG 30454 / Houston 1)</name>
    <name type="common">Rochalimaea henselae</name>
    <dbReference type="NCBI Taxonomy" id="283166"/>
    <lineage>
        <taxon>Bacteria</taxon>
        <taxon>Pseudomonadati</taxon>
        <taxon>Pseudomonadota</taxon>
        <taxon>Alphaproteobacteria</taxon>
        <taxon>Hyphomicrobiales</taxon>
        <taxon>Bartonellaceae</taxon>
        <taxon>Bartonella</taxon>
    </lineage>
</organism>
<sequence>MSMIITILNGPNLNFLGKREPEIYGTETLKDIEQFCKECATRLGVRIHFYQSNYEGQLVEWIQEAIGVSAGLIINPAAYSHTSVAILDALKMFTGTKVEVHLSHIYHREAFRHHSYTSAAVDAVIAGCGGDGYWLALEYIVKRFNRNK</sequence>
<keyword id="KW-0028">Amino-acid biosynthesis</keyword>
<keyword id="KW-0057">Aromatic amino acid biosynthesis</keyword>
<keyword id="KW-0456">Lyase</keyword>
<comment type="function">
    <text evidence="1">Catalyzes a trans-dehydration via an enolate intermediate.</text>
</comment>
<comment type="catalytic activity">
    <reaction evidence="1">
        <text>3-dehydroquinate = 3-dehydroshikimate + H2O</text>
        <dbReference type="Rhea" id="RHEA:21096"/>
        <dbReference type="ChEBI" id="CHEBI:15377"/>
        <dbReference type="ChEBI" id="CHEBI:16630"/>
        <dbReference type="ChEBI" id="CHEBI:32364"/>
        <dbReference type="EC" id="4.2.1.10"/>
    </reaction>
</comment>
<comment type="pathway">
    <text evidence="1">Metabolic intermediate biosynthesis; chorismate biosynthesis; chorismate from D-erythrose 4-phosphate and phosphoenolpyruvate: step 3/7.</text>
</comment>
<comment type="subunit">
    <text evidence="1">Homododecamer.</text>
</comment>
<comment type="similarity">
    <text evidence="1">Belongs to the type-II 3-dehydroquinase family.</text>
</comment>
<gene>
    <name evidence="1" type="primary">aroQ</name>
    <name type="ordered locus">BH01210</name>
</gene>
<protein>
    <recommendedName>
        <fullName evidence="1">3-dehydroquinate dehydratase</fullName>
        <shortName evidence="1">3-dehydroquinase</shortName>
        <ecNumber evidence="1">4.2.1.10</ecNumber>
    </recommendedName>
    <alternativeName>
        <fullName evidence="1">Type II DHQase</fullName>
    </alternativeName>
</protein>
<name>AROQ_BARHE</name>
<dbReference type="EC" id="4.2.1.10" evidence="1"/>
<dbReference type="EMBL" id="BX897699">
    <property type="protein sequence ID" value="CAF26936.1"/>
    <property type="molecule type" value="Genomic_DNA"/>
</dbReference>
<dbReference type="RefSeq" id="WP_011180078.1">
    <property type="nucleotide sequence ID" value="NZ_LRIJ02000001.1"/>
</dbReference>
<dbReference type="SMR" id="Q6G523"/>
<dbReference type="PaxDb" id="283166-BH01210"/>
<dbReference type="EnsemblBacteria" id="CAF26936">
    <property type="protein sequence ID" value="CAF26936"/>
    <property type="gene ID" value="BH01210"/>
</dbReference>
<dbReference type="GeneID" id="92986404"/>
<dbReference type="KEGG" id="bhe:BH01210"/>
<dbReference type="eggNOG" id="COG0757">
    <property type="taxonomic scope" value="Bacteria"/>
</dbReference>
<dbReference type="OrthoDB" id="9790793at2"/>
<dbReference type="UniPathway" id="UPA00053">
    <property type="reaction ID" value="UER00086"/>
</dbReference>
<dbReference type="Proteomes" id="UP000000421">
    <property type="component" value="Chromosome"/>
</dbReference>
<dbReference type="GO" id="GO:0003855">
    <property type="term" value="F:3-dehydroquinate dehydratase activity"/>
    <property type="evidence" value="ECO:0007669"/>
    <property type="project" value="UniProtKB-UniRule"/>
</dbReference>
<dbReference type="GO" id="GO:0008652">
    <property type="term" value="P:amino acid biosynthetic process"/>
    <property type="evidence" value="ECO:0007669"/>
    <property type="project" value="UniProtKB-KW"/>
</dbReference>
<dbReference type="GO" id="GO:0009073">
    <property type="term" value="P:aromatic amino acid family biosynthetic process"/>
    <property type="evidence" value="ECO:0007669"/>
    <property type="project" value="UniProtKB-KW"/>
</dbReference>
<dbReference type="GO" id="GO:0009423">
    <property type="term" value="P:chorismate biosynthetic process"/>
    <property type="evidence" value="ECO:0007669"/>
    <property type="project" value="UniProtKB-UniRule"/>
</dbReference>
<dbReference type="GO" id="GO:0019631">
    <property type="term" value="P:quinate catabolic process"/>
    <property type="evidence" value="ECO:0007669"/>
    <property type="project" value="TreeGrafter"/>
</dbReference>
<dbReference type="CDD" id="cd00466">
    <property type="entry name" value="DHQase_II"/>
    <property type="match status" value="1"/>
</dbReference>
<dbReference type="Gene3D" id="3.40.50.9100">
    <property type="entry name" value="Dehydroquinase, class II"/>
    <property type="match status" value="1"/>
</dbReference>
<dbReference type="HAMAP" id="MF_00169">
    <property type="entry name" value="AroQ"/>
    <property type="match status" value="1"/>
</dbReference>
<dbReference type="InterPro" id="IPR001874">
    <property type="entry name" value="DHquinase_II"/>
</dbReference>
<dbReference type="InterPro" id="IPR018509">
    <property type="entry name" value="DHquinase_II_CS"/>
</dbReference>
<dbReference type="InterPro" id="IPR036441">
    <property type="entry name" value="DHquinase_II_sf"/>
</dbReference>
<dbReference type="NCBIfam" id="TIGR01088">
    <property type="entry name" value="aroQ"/>
    <property type="match status" value="1"/>
</dbReference>
<dbReference type="NCBIfam" id="NF003805">
    <property type="entry name" value="PRK05395.1-2"/>
    <property type="match status" value="1"/>
</dbReference>
<dbReference type="NCBIfam" id="NF003806">
    <property type="entry name" value="PRK05395.1-3"/>
    <property type="match status" value="1"/>
</dbReference>
<dbReference type="NCBIfam" id="NF003807">
    <property type="entry name" value="PRK05395.1-4"/>
    <property type="match status" value="1"/>
</dbReference>
<dbReference type="PANTHER" id="PTHR21272">
    <property type="entry name" value="CATABOLIC 3-DEHYDROQUINASE"/>
    <property type="match status" value="1"/>
</dbReference>
<dbReference type="PANTHER" id="PTHR21272:SF3">
    <property type="entry name" value="CATABOLIC 3-DEHYDROQUINASE"/>
    <property type="match status" value="1"/>
</dbReference>
<dbReference type="Pfam" id="PF01220">
    <property type="entry name" value="DHquinase_II"/>
    <property type="match status" value="1"/>
</dbReference>
<dbReference type="PIRSF" id="PIRSF001399">
    <property type="entry name" value="DHquinase_II"/>
    <property type="match status" value="1"/>
</dbReference>
<dbReference type="SUPFAM" id="SSF52304">
    <property type="entry name" value="Type II 3-dehydroquinate dehydratase"/>
    <property type="match status" value="1"/>
</dbReference>
<dbReference type="PROSITE" id="PS01029">
    <property type="entry name" value="DEHYDROQUINASE_II"/>
    <property type="match status" value="1"/>
</dbReference>